<feature type="chain" id="PRO_0000047618" description="Zinc finger protein 497">
    <location>
        <begin position="1"/>
        <end position="498"/>
    </location>
</feature>
<feature type="zinc finger region" description="C2H2-type 1" evidence="1">
    <location>
        <begin position="106"/>
        <end position="128"/>
    </location>
</feature>
<feature type="zinc finger region" description="C2H2-type 2" evidence="1">
    <location>
        <begin position="134"/>
        <end position="156"/>
    </location>
</feature>
<feature type="zinc finger region" description="C2H2-type 3" evidence="1">
    <location>
        <begin position="162"/>
        <end position="184"/>
    </location>
</feature>
<feature type="zinc finger region" description="C2H2-type 4" evidence="1">
    <location>
        <begin position="190"/>
        <end position="212"/>
    </location>
</feature>
<feature type="zinc finger region" description="C2H2-type 5" evidence="1">
    <location>
        <begin position="218"/>
        <end position="240"/>
    </location>
</feature>
<feature type="zinc finger region" description="C2H2-type 6" evidence="1">
    <location>
        <begin position="246"/>
        <end position="268"/>
    </location>
</feature>
<feature type="zinc finger region" description="C2H2-type 7" evidence="1">
    <location>
        <begin position="274"/>
        <end position="296"/>
    </location>
</feature>
<feature type="zinc finger region" description="C2H2-type 8" evidence="1">
    <location>
        <begin position="302"/>
        <end position="324"/>
    </location>
</feature>
<feature type="zinc finger region" description="C2H2-type 9" evidence="1">
    <location>
        <begin position="330"/>
        <end position="352"/>
    </location>
</feature>
<feature type="zinc finger region" description="C2H2-type 10" evidence="1">
    <location>
        <begin position="358"/>
        <end position="380"/>
    </location>
</feature>
<feature type="zinc finger region" description="C2H2-type 11" evidence="1">
    <location>
        <begin position="386"/>
        <end position="408"/>
    </location>
</feature>
<feature type="zinc finger region" description="C2H2-type 12" evidence="1">
    <location>
        <begin position="414"/>
        <end position="436"/>
    </location>
</feature>
<feature type="zinc finger region" description="C2H2-type 13" evidence="1">
    <location>
        <begin position="442"/>
        <end position="464"/>
    </location>
</feature>
<feature type="zinc finger region" description="C2H2-type 14" evidence="1">
    <location>
        <begin position="470"/>
        <end position="492"/>
    </location>
</feature>
<feature type="region of interest" description="Disordered" evidence="2">
    <location>
        <begin position="30"/>
        <end position="104"/>
    </location>
</feature>
<feature type="sequence variant" id="VAR_055270" description="In dbSNP:rs12609654." evidence="3 4">
    <original>H</original>
    <variation>Q</variation>
    <location>
        <position position="174"/>
    </location>
</feature>
<feature type="sequence conflict" description="In Ref. 4; AAF16412." evidence="5" ref="4">
    <original>HTG</original>
    <variation>RA</variation>
    <location>
        <begin position="212"/>
        <end position="214"/>
    </location>
</feature>
<feature type="sequence conflict" description="In Ref. 4; AAF16412." evidence="5" ref="4">
    <original>T</original>
    <variation>A</variation>
    <location>
        <position position="241"/>
    </location>
</feature>
<feature type="sequence conflict" description="In Ref. 4; AAF16412." evidence="5" ref="4">
    <original>H</original>
    <variation>Y</variation>
    <location>
        <position position="320"/>
    </location>
</feature>
<feature type="sequence conflict" description="In Ref. 1; BAC86660." evidence="5" ref="1">
    <original>F</original>
    <variation>S</variation>
    <location>
        <position position="367"/>
    </location>
</feature>
<evidence type="ECO:0000255" key="1">
    <source>
        <dbReference type="PROSITE-ProRule" id="PRU00042"/>
    </source>
</evidence>
<evidence type="ECO:0000256" key="2">
    <source>
        <dbReference type="SAM" id="MobiDB-lite"/>
    </source>
</evidence>
<evidence type="ECO:0000269" key="3">
    <source>
    </source>
</evidence>
<evidence type="ECO:0000269" key="4">
    <source>
    </source>
</evidence>
<evidence type="ECO:0000305" key="5"/>
<keyword id="KW-0238">DNA-binding</keyword>
<keyword id="KW-0479">Metal-binding</keyword>
<keyword id="KW-0539">Nucleus</keyword>
<keyword id="KW-1267">Proteomics identification</keyword>
<keyword id="KW-1185">Reference proteome</keyword>
<keyword id="KW-0677">Repeat</keyword>
<keyword id="KW-0804">Transcription</keyword>
<keyword id="KW-0805">Transcription regulation</keyword>
<keyword id="KW-0862">Zinc</keyword>
<keyword id="KW-0863">Zinc-finger</keyword>
<protein>
    <recommendedName>
        <fullName>Zinc finger protein 497</fullName>
    </recommendedName>
</protein>
<comment type="function">
    <text>May be involved in transcriptional regulation.</text>
</comment>
<comment type="interaction">
    <interactant intactId="EBI-10486136">
        <id>Q6ZNH5</id>
    </interactant>
    <interactant intactId="EBI-2115097">
        <id>P07339</id>
        <label>CTSD</label>
    </interactant>
    <organismsDiffer>false</organismsDiffer>
    <experiments>4</experiments>
</comment>
<comment type="interaction">
    <interactant intactId="EBI-10486136">
        <id>Q6ZNH5</id>
    </interactant>
    <interactant intactId="EBI-3867333">
        <id>A8MQ03</id>
        <label>CYSRT1</label>
    </interactant>
    <organismsDiffer>false</organismsDiffer>
    <experiments>3</experiments>
</comment>
<comment type="interaction">
    <interactant intactId="EBI-10486136">
        <id>Q6ZNH5</id>
    </interactant>
    <interactant intactId="EBI-10976677">
        <id>G5E9A7</id>
        <label>DMWD</label>
    </interactant>
    <organismsDiffer>false</organismsDiffer>
    <experiments>3</experiments>
</comment>
<comment type="interaction">
    <interactant intactId="EBI-10486136">
        <id>Q6ZNH5</id>
    </interactant>
    <interactant intactId="EBI-739789">
        <id>Q92997</id>
        <label>DVL3</label>
    </interactant>
    <organismsDiffer>false</organismsDiffer>
    <experiments>3</experiments>
</comment>
<comment type="interaction">
    <interactant intactId="EBI-10486136">
        <id>Q6ZNH5</id>
    </interactant>
    <interactant intactId="EBI-12075758">
        <id>Q9NZ52-2</id>
        <label>GGA3</label>
    </interactant>
    <organismsDiffer>false</organismsDiffer>
    <experiments>3</experiments>
</comment>
<comment type="interaction">
    <interactant intactId="EBI-10486136">
        <id>Q6ZNH5</id>
    </interactant>
    <interactant intactId="EBI-5916454">
        <id>A6NEM1</id>
        <label>GOLGA6L9</label>
    </interactant>
    <organismsDiffer>false</organismsDiffer>
    <experiments>3</experiments>
</comment>
<comment type="interaction">
    <interactant intactId="EBI-10486136">
        <id>Q6ZNH5</id>
    </interactant>
    <interactant intactId="EBI-747754">
        <id>P28799</id>
        <label>GRN</label>
    </interactant>
    <organismsDiffer>false</organismsDiffer>
    <experiments>3</experiments>
</comment>
<comment type="interaction">
    <interactant intactId="EBI-10486136">
        <id>Q6ZNH5</id>
    </interactant>
    <interactant intactId="EBI-10961706">
        <id>Q96ED9-2</id>
        <label>HOOK2</label>
    </interactant>
    <organismsDiffer>false</organismsDiffer>
    <experiments>3</experiments>
</comment>
<comment type="interaction">
    <interactant intactId="EBI-10486136">
        <id>Q6ZNH5</id>
    </interactant>
    <interactant intactId="EBI-466029">
        <id>P42858</id>
        <label>HTT</label>
    </interactant>
    <organismsDiffer>false</organismsDiffer>
    <experiments>9</experiments>
</comment>
<comment type="interaction">
    <interactant intactId="EBI-10486136">
        <id>Q6ZNH5</id>
    </interactant>
    <interactant intactId="EBI-742808">
        <id>Q5VWX1</id>
        <label>KHDRBS2</label>
    </interactant>
    <organismsDiffer>false</organismsDiffer>
    <experiments>3</experiments>
</comment>
<comment type="interaction">
    <interactant intactId="EBI-10486136">
        <id>Q6ZNH5</id>
    </interactant>
    <interactant intactId="EBI-10975473">
        <id>O60333-2</id>
        <label>KIF1B</label>
    </interactant>
    <organismsDiffer>false</organismsDiffer>
    <experiments>3</experiments>
</comment>
<comment type="interaction">
    <interactant intactId="EBI-10486136">
        <id>Q6ZNH5</id>
    </interactant>
    <interactant intactId="EBI-11959885">
        <id>Q07627</id>
        <label>KRTAP1-1</label>
    </interactant>
    <organismsDiffer>false</organismsDiffer>
    <experiments>3</experiments>
</comment>
<comment type="interaction">
    <interactant intactId="EBI-10486136">
        <id>Q6ZNH5</id>
    </interactant>
    <interactant intactId="EBI-11749135">
        <id>Q8IUG1</id>
        <label>KRTAP1-3</label>
    </interactant>
    <organismsDiffer>false</organismsDiffer>
    <experiments>3</experiments>
</comment>
<comment type="interaction">
    <interactant intactId="EBI-10486136">
        <id>Q6ZNH5</id>
    </interactant>
    <interactant intactId="EBI-10171774">
        <id>P60410</id>
        <label>KRTAP10-8</label>
    </interactant>
    <organismsDiffer>false</organismsDiffer>
    <experiments>3</experiments>
</comment>
<comment type="interaction">
    <interactant intactId="EBI-10486136">
        <id>Q6ZNH5</id>
    </interactant>
    <interactant intactId="EBI-10172052">
        <id>P60411</id>
        <label>KRTAP10-9</label>
    </interactant>
    <organismsDiffer>false</organismsDiffer>
    <experiments>3</experiments>
</comment>
<comment type="interaction">
    <interactant intactId="EBI-10486136">
        <id>Q6ZNH5</id>
    </interactant>
    <interactant intactId="EBI-10176379">
        <id>P59991</id>
        <label>KRTAP12-2</label>
    </interactant>
    <organismsDiffer>false</organismsDiffer>
    <experiments>3</experiments>
</comment>
<comment type="interaction">
    <interactant intactId="EBI-10486136">
        <id>Q6ZNH5</id>
    </interactant>
    <interactant intactId="EBI-11953334">
        <id>P60328</id>
        <label>KRTAP12-3</label>
    </interactant>
    <organismsDiffer>false</organismsDiffer>
    <experiments>3</experiments>
</comment>
<comment type="interaction">
    <interactant intactId="EBI-10486136">
        <id>Q6ZNH5</id>
    </interactant>
    <interactant intactId="EBI-739863">
        <id>Q9BQ66</id>
        <label>KRTAP4-12</label>
    </interactant>
    <organismsDiffer>false</organismsDiffer>
    <experiments>3</experiments>
</comment>
<comment type="interaction">
    <interactant intactId="EBI-10486136">
        <id>Q6ZNH5</id>
    </interactant>
    <interactant intactId="EBI-11958132">
        <id>Q9BYR3</id>
        <label>KRTAP4-4</label>
    </interactant>
    <organismsDiffer>false</organismsDiffer>
    <experiments>3</experiments>
</comment>
<comment type="interaction">
    <interactant intactId="EBI-10486136">
        <id>Q6ZNH5</id>
    </interactant>
    <interactant intactId="EBI-22311199">
        <id>Q3LI67</id>
        <label>KRTAP6-3</label>
    </interactant>
    <organismsDiffer>false</organismsDiffer>
    <experiments>3</experiments>
</comment>
<comment type="interaction">
    <interactant intactId="EBI-10486136">
        <id>Q6ZNH5</id>
    </interactant>
    <interactant intactId="EBI-1043191">
        <id>Q9BYQ3</id>
        <label>KRTAP9-3</label>
    </interactant>
    <organismsDiffer>false</organismsDiffer>
    <experiments>3</experiments>
</comment>
<comment type="interaction">
    <interactant intactId="EBI-10486136">
        <id>Q6ZNH5</id>
    </interactant>
    <interactant intactId="EBI-351935">
        <id>P02545</id>
        <label>LMNA</label>
    </interactant>
    <organismsDiffer>false</organismsDiffer>
    <experiments>3</experiments>
</comment>
<comment type="interaction">
    <interactant intactId="EBI-10486136">
        <id>Q6ZNH5</id>
    </interactant>
    <interactant intactId="EBI-307531">
        <id>P23508</id>
        <label>MCC</label>
    </interactant>
    <organismsDiffer>false</organismsDiffer>
    <experiments>3</experiments>
</comment>
<comment type="interaction">
    <interactant intactId="EBI-10486136">
        <id>Q6ZNH5</id>
    </interactant>
    <interactant intactId="EBI-724076">
        <id>Q99750</id>
        <label>MDFI</label>
    </interactant>
    <organismsDiffer>false</organismsDiffer>
    <experiments>3</experiments>
</comment>
<comment type="interaction">
    <interactant intactId="EBI-10486136">
        <id>Q6ZNH5</id>
    </interactant>
    <interactant intactId="EBI-10172526">
        <id>Q9UJV3-2</id>
        <label>MID2</label>
    </interactant>
    <organismsDiffer>false</organismsDiffer>
    <experiments>3</experiments>
</comment>
<comment type="interaction">
    <interactant intactId="EBI-10486136">
        <id>Q6ZNH5</id>
    </interactant>
    <interactant intactId="EBI-11522433">
        <id>Q5JR59-3</id>
        <label>MTUS2</label>
    </interactant>
    <organismsDiffer>false</organismsDiffer>
    <experiments>3</experiments>
</comment>
<comment type="interaction">
    <interactant intactId="EBI-10486136">
        <id>Q6ZNH5</id>
    </interactant>
    <interactant intactId="EBI-1014472">
        <id>P35240</id>
        <label>NF2</label>
    </interactant>
    <organismsDiffer>false</organismsDiffer>
    <experiments>3</experiments>
</comment>
<comment type="interaction">
    <interactant intactId="EBI-10486136">
        <id>Q6ZNH5</id>
    </interactant>
    <interactant intactId="EBI-22310682">
        <id>P0DPK4</id>
        <label>NOTCH2NLC</label>
    </interactant>
    <organismsDiffer>false</organismsDiffer>
    <experiments>3</experiments>
</comment>
<comment type="interaction">
    <interactant intactId="EBI-10486136">
        <id>Q6ZNH5</id>
    </interactant>
    <interactant intactId="EBI-1051317">
        <id>Q9H4L5</id>
        <label>OSBPL3</label>
    </interactant>
    <organismsDiffer>false</organismsDiffer>
    <experiments>3</experiments>
</comment>
<comment type="interaction">
    <interactant intactId="EBI-10486136">
        <id>Q6ZNH5</id>
    </interactant>
    <interactant intactId="EBI-79165">
        <id>Q9NRD5</id>
        <label>PICK1</label>
    </interactant>
    <organismsDiffer>false</organismsDiffer>
    <experiments>3</experiments>
</comment>
<comment type="interaction">
    <interactant intactId="EBI-10486136">
        <id>Q6ZNH5</id>
    </interactant>
    <interactant intactId="EBI-749195">
        <id>P60891</id>
        <label>PRPS1</label>
    </interactant>
    <organismsDiffer>false</organismsDiffer>
    <experiments>3</experiments>
</comment>
<comment type="interaction">
    <interactant intactId="EBI-10486136">
        <id>Q6ZNH5</id>
    </interactant>
    <interactant intactId="EBI-2860264">
        <id>Q16825</id>
        <label>PTPN21</label>
    </interactant>
    <organismsDiffer>false</organismsDiffer>
    <experiments>3</experiments>
</comment>
<comment type="interaction">
    <interactant intactId="EBI-10486136">
        <id>Q6ZNH5</id>
    </interactant>
    <interactant intactId="EBI-2880222">
        <id>Q96QR8</id>
        <label>PURB</label>
    </interactant>
    <organismsDiffer>false</organismsDiffer>
    <experiments>3</experiments>
</comment>
<comment type="interaction">
    <interactant intactId="EBI-10486136">
        <id>Q6ZNH5</id>
    </interactant>
    <interactant intactId="EBI-396669">
        <id>Q9Y3C5</id>
        <label>RNF11</label>
    </interactant>
    <organismsDiffer>false</organismsDiffer>
    <experiments>3</experiments>
</comment>
<comment type="interaction">
    <interactant intactId="EBI-10486136">
        <id>Q6ZNH5</id>
    </interactant>
    <interactant intactId="EBI-5235340">
        <id>Q7Z699</id>
        <label>SPRED1</label>
    </interactant>
    <organismsDiffer>false</organismsDiffer>
    <experiments>3</experiments>
</comment>
<comment type="interaction">
    <interactant intactId="EBI-10486136">
        <id>Q6ZNH5</id>
    </interactant>
    <interactant intactId="EBI-749441">
        <id>O00204</id>
        <label>SULT2B1</label>
    </interactant>
    <organismsDiffer>false</organismsDiffer>
    <experiments>3</experiments>
</comment>
<comment type="interaction">
    <interactant intactId="EBI-10486136">
        <id>Q6ZNH5</id>
    </interactant>
    <interactant intactId="EBI-949753">
        <id>Q63HR2</id>
        <label>TNS2</label>
    </interactant>
    <organismsDiffer>false</organismsDiffer>
    <experiments>3</experiments>
</comment>
<comment type="interaction">
    <interactant intactId="EBI-10486136">
        <id>Q6ZNH5</id>
    </interactant>
    <interactant intactId="EBI-725997">
        <id>Q8WV44</id>
        <label>TRIM41</label>
    </interactant>
    <organismsDiffer>false</organismsDiffer>
    <experiments>3</experiments>
</comment>
<comment type="interaction">
    <interactant intactId="EBI-10486136">
        <id>Q6ZNH5</id>
    </interactant>
    <interactant intactId="EBI-11957238">
        <id>Q2TAL6</id>
        <label>VWC2</label>
    </interactant>
    <organismsDiffer>false</organismsDiffer>
    <experiments>3</experiments>
</comment>
<comment type="interaction">
    <interactant intactId="EBI-10486136">
        <id>Q6ZNH5</id>
    </interactant>
    <interactant intactId="EBI-720609">
        <id>O76024</id>
        <label>WFS1</label>
    </interactant>
    <organismsDiffer>false</organismsDiffer>
    <experiments>3</experiments>
</comment>
<comment type="interaction">
    <interactant intactId="EBI-10486136">
        <id>Q6ZNH5</id>
    </interactant>
    <interactant intactId="EBI-742740">
        <id>Q96BR9</id>
        <label>ZBTB8A</label>
    </interactant>
    <organismsDiffer>false</organismsDiffer>
    <experiments>3</experiments>
</comment>
<comment type="interaction">
    <interactant intactId="EBI-10486136">
        <id>Q6ZNH5</id>
    </interactant>
    <interactant intactId="EBI-751409">
        <id>Q8WTR7</id>
        <label>ZNF473</label>
    </interactant>
    <organismsDiffer>false</organismsDiffer>
    <experiments>3</experiments>
</comment>
<comment type="interaction">
    <interactant intactId="EBI-10486136">
        <id>Q6ZNH5</id>
    </interactant>
    <interactant intactId="EBI-11035148">
        <id>Q8TF50</id>
        <label>ZNF526</label>
    </interactant>
    <organismsDiffer>false</organismsDiffer>
    <experiments>3</experiments>
</comment>
<comment type="interaction">
    <interactant intactId="EBI-10486136">
        <id>Q6ZNH5</id>
    </interactant>
    <interactant intactId="EBI-7138235">
        <id>Q9NQZ8</id>
        <label>ZNF71</label>
    </interactant>
    <organismsDiffer>false</organismsDiffer>
    <experiments>5</experiments>
</comment>
<comment type="interaction">
    <interactant intactId="EBI-10486136">
        <id>Q6ZNH5</id>
    </interactant>
    <interactant intactId="EBI-10240849">
        <id>Q3KQV3</id>
        <label>ZNF792</label>
    </interactant>
    <organismsDiffer>false</organismsDiffer>
    <experiments>3</experiments>
</comment>
<comment type="interaction">
    <interactant intactId="EBI-10486136">
        <id>Q6ZNH5</id>
    </interactant>
    <interactant intactId="EBI-5667516">
        <id>Q9Y2P0</id>
        <label>ZNF835</label>
    </interactant>
    <organismsDiffer>false</organismsDiffer>
    <experiments>3</experiments>
</comment>
<comment type="interaction">
    <interactant intactId="EBI-10486136">
        <id>Q6ZNH5</id>
    </interactant>
    <interactant intactId="EBI-11962574">
        <id>Q96EG3</id>
        <label>ZNF837</label>
    </interactant>
    <organismsDiffer>false</organismsDiffer>
    <experiments>3</experiments>
</comment>
<comment type="interaction">
    <interactant intactId="EBI-10486136">
        <id>Q6ZNH5</id>
    </interactant>
    <interactant intactId="EBI-527853">
        <id>Q9UGI0</id>
        <label>ZRANB1</label>
    </interactant>
    <organismsDiffer>false</organismsDiffer>
    <experiments>3</experiments>
</comment>
<comment type="subcellular location">
    <subcellularLocation>
        <location evidence="5">Nucleus</location>
    </subcellularLocation>
</comment>
<comment type="similarity">
    <text evidence="5">Belongs to the krueppel C2H2-type zinc-finger protein family.</text>
</comment>
<sequence>MESPRGWTLQVAPEEGQVLCNVKTATRGLSEGAVSGGWGAWENSTEVPREAGDGQRQQATLGAADEQGGPGRELGPADGGRDGAGPRSEPADRALRPSPLPEEPGCRCGECGKAFSQGSYLLQHRRVHTGEKPYTCPECGKAFAWSSNLSQHQRIHSGEKPYACRECGKAFRAHSQLIHHQETHSGLKPFRCPDCGKSFGRSTTLVQHRRTHTGEKPYECPECGKAFSWNSNFLEHRRVHTGARPHACRDCGKAFSQSSNLAEHLKIHAGARPHACPDCGKAFVRVAGLRQHRRTHSSEKPFPCAECGKAFRESSQLLQHQRTHTGERPFECAECGQAFVMGSYLAEHRRVHTGEKPHACAQCGKAFSQRSNLLSHRRTHSGAKPFACADCGKAFRGSSGLAHHRLSHTGERPFACAECGKAFRGSSELRQHQRLHSGERPFVCAHCSKAFVRKSELLSHRRTHTGERPYACGECGKPFSHRCNLNEHQKRHGGRAAP</sequence>
<gene>
    <name type="primary">ZNF497</name>
</gene>
<proteinExistence type="evidence at protein level"/>
<reference key="1">
    <citation type="journal article" date="2004" name="Nat. Genet.">
        <title>Complete sequencing and characterization of 21,243 full-length human cDNAs.</title>
        <authorList>
            <person name="Ota T."/>
            <person name="Suzuki Y."/>
            <person name="Nishikawa T."/>
            <person name="Otsuki T."/>
            <person name="Sugiyama T."/>
            <person name="Irie R."/>
            <person name="Wakamatsu A."/>
            <person name="Hayashi K."/>
            <person name="Sato H."/>
            <person name="Nagai K."/>
            <person name="Kimura K."/>
            <person name="Makita H."/>
            <person name="Sekine M."/>
            <person name="Obayashi M."/>
            <person name="Nishi T."/>
            <person name="Shibahara T."/>
            <person name="Tanaka T."/>
            <person name="Ishii S."/>
            <person name="Yamamoto J."/>
            <person name="Saito K."/>
            <person name="Kawai Y."/>
            <person name="Isono Y."/>
            <person name="Nakamura Y."/>
            <person name="Nagahari K."/>
            <person name="Murakami K."/>
            <person name="Yasuda T."/>
            <person name="Iwayanagi T."/>
            <person name="Wagatsuma M."/>
            <person name="Shiratori A."/>
            <person name="Sudo H."/>
            <person name="Hosoiri T."/>
            <person name="Kaku Y."/>
            <person name="Kodaira H."/>
            <person name="Kondo H."/>
            <person name="Sugawara M."/>
            <person name="Takahashi M."/>
            <person name="Kanda K."/>
            <person name="Yokoi T."/>
            <person name="Furuya T."/>
            <person name="Kikkawa E."/>
            <person name="Omura Y."/>
            <person name="Abe K."/>
            <person name="Kamihara K."/>
            <person name="Katsuta N."/>
            <person name="Sato K."/>
            <person name="Tanikawa M."/>
            <person name="Yamazaki M."/>
            <person name="Ninomiya K."/>
            <person name="Ishibashi T."/>
            <person name="Yamashita H."/>
            <person name="Murakawa K."/>
            <person name="Fujimori K."/>
            <person name="Tanai H."/>
            <person name="Kimata M."/>
            <person name="Watanabe M."/>
            <person name="Hiraoka S."/>
            <person name="Chiba Y."/>
            <person name="Ishida S."/>
            <person name="Ono Y."/>
            <person name="Takiguchi S."/>
            <person name="Watanabe S."/>
            <person name="Yosida M."/>
            <person name="Hotuta T."/>
            <person name="Kusano J."/>
            <person name="Kanehori K."/>
            <person name="Takahashi-Fujii A."/>
            <person name="Hara H."/>
            <person name="Tanase T.-O."/>
            <person name="Nomura Y."/>
            <person name="Togiya S."/>
            <person name="Komai F."/>
            <person name="Hara R."/>
            <person name="Takeuchi K."/>
            <person name="Arita M."/>
            <person name="Imose N."/>
            <person name="Musashino K."/>
            <person name="Yuuki H."/>
            <person name="Oshima A."/>
            <person name="Sasaki N."/>
            <person name="Aotsuka S."/>
            <person name="Yoshikawa Y."/>
            <person name="Matsunawa H."/>
            <person name="Ichihara T."/>
            <person name="Shiohata N."/>
            <person name="Sano S."/>
            <person name="Moriya S."/>
            <person name="Momiyama H."/>
            <person name="Satoh N."/>
            <person name="Takami S."/>
            <person name="Terashima Y."/>
            <person name="Suzuki O."/>
            <person name="Nakagawa S."/>
            <person name="Senoh A."/>
            <person name="Mizoguchi H."/>
            <person name="Goto Y."/>
            <person name="Shimizu F."/>
            <person name="Wakebe H."/>
            <person name="Hishigaki H."/>
            <person name="Watanabe T."/>
            <person name="Sugiyama A."/>
            <person name="Takemoto M."/>
            <person name="Kawakami B."/>
            <person name="Yamazaki M."/>
            <person name="Watanabe K."/>
            <person name="Kumagai A."/>
            <person name="Itakura S."/>
            <person name="Fukuzumi Y."/>
            <person name="Fujimori Y."/>
            <person name="Komiyama M."/>
            <person name="Tashiro H."/>
            <person name="Tanigami A."/>
            <person name="Fujiwara T."/>
            <person name="Ono T."/>
            <person name="Yamada K."/>
            <person name="Fujii Y."/>
            <person name="Ozaki K."/>
            <person name="Hirao M."/>
            <person name="Ohmori Y."/>
            <person name="Kawabata A."/>
            <person name="Hikiji T."/>
            <person name="Kobatake N."/>
            <person name="Inagaki H."/>
            <person name="Ikema Y."/>
            <person name="Okamoto S."/>
            <person name="Okitani R."/>
            <person name="Kawakami T."/>
            <person name="Noguchi S."/>
            <person name="Itoh T."/>
            <person name="Shigeta K."/>
            <person name="Senba T."/>
            <person name="Matsumura K."/>
            <person name="Nakajima Y."/>
            <person name="Mizuno T."/>
            <person name="Morinaga M."/>
            <person name="Sasaki M."/>
            <person name="Togashi T."/>
            <person name="Oyama M."/>
            <person name="Hata H."/>
            <person name="Watanabe M."/>
            <person name="Komatsu T."/>
            <person name="Mizushima-Sugano J."/>
            <person name="Satoh T."/>
            <person name="Shirai Y."/>
            <person name="Takahashi Y."/>
            <person name="Nakagawa K."/>
            <person name="Okumura K."/>
            <person name="Nagase T."/>
            <person name="Nomura N."/>
            <person name="Kikuchi H."/>
            <person name="Masuho Y."/>
            <person name="Yamashita R."/>
            <person name="Nakai K."/>
            <person name="Yada T."/>
            <person name="Nakamura Y."/>
            <person name="Ohara O."/>
            <person name="Isogai T."/>
            <person name="Sugano S."/>
        </authorList>
    </citation>
    <scope>NUCLEOTIDE SEQUENCE [LARGE SCALE MRNA]</scope>
    <scope>VARIANT GLN-174</scope>
    <source>
        <tissue>Cerebellum</tissue>
        <tissue>Teratocarcinoma</tissue>
    </source>
</reference>
<reference key="2">
    <citation type="submission" date="2005-07" db="EMBL/GenBank/DDBJ databases">
        <authorList>
            <person name="Mural R.J."/>
            <person name="Istrail S."/>
            <person name="Sutton G.G."/>
            <person name="Florea L."/>
            <person name="Halpern A.L."/>
            <person name="Mobarry C.M."/>
            <person name="Lippert R."/>
            <person name="Walenz B."/>
            <person name="Shatkay H."/>
            <person name="Dew I."/>
            <person name="Miller J.R."/>
            <person name="Flanigan M.J."/>
            <person name="Edwards N.J."/>
            <person name="Bolanos R."/>
            <person name="Fasulo D."/>
            <person name="Halldorsson B.V."/>
            <person name="Hannenhalli S."/>
            <person name="Turner R."/>
            <person name="Yooseph S."/>
            <person name="Lu F."/>
            <person name="Nusskern D.R."/>
            <person name="Shue B.C."/>
            <person name="Zheng X.H."/>
            <person name="Zhong F."/>
            <person name="Delcher A.L."/>
            <person name="Huson D.H."/>
            <person name="Kravitz S.A."/>
            <person name="Mouchard L."/>
            <person name="Reinert K."/>
            <person name="Remington K.A."/>
            <person name="Clark A.G."/>
            <person name="Waterman M.S."/>
            <person name="Eichler E.E."/>
            <person name="Adams M.D."/>
            <person name="Hunkapiller M.W."/>
            <person name="Myers E.W."/>
            <person name="Venter J.C."/>
        </authorList>
    </citation>
    <scope>NUCLEOTIDE SEQUENCE [LARGE SCALE GENOMIC DNA]</scope>
</reference>
<reference key="3">
    <citation type="journal article" date="2004" name="Genome Res.">
        <title>The status, quality, and expansion of the NIH full-length cDNA project: the Mammalian Gene Collection (MGC).</title>
        <authorList>
            <consortium name="The MGC Project Team"/>
        </authorList>
    </citation>
    <scope>NUCLEOTIDE SEQUENCE [LARGE SCALE MRNA]</scope>
    <scope>VARIANT GLN-174</scope>
</reference>
<reference key="4">
    <citation type="submission" date="1998-05" db="EMBL/GenBank/DDBJ databases">
        <authorList>
            <person name="Ma X."/>
            <person name="Huang B."/>
        </authorList>
    </citation>
    <scope>NUCLEOTIDE SEQUENCE [GENOMIC DNA] OF 176-329</scope>
</reference>
<accession>Q6ZNH5</accession>
<accession>Q05AG8</accession>
<accession>Q0VF48</accession>
<accession>Q6ZTD2</accession>
<accession>Q9UIA8</accession>
<name>ZN497_HUMAN</name>
<dbReference type="EMBL" id="AK126727">
    <property type="protein sequence ID" value="BAC86660.1"/>
    <property type="molecule type" value="mRNA"/>
</dbReference>
<dbReference type="EMBL" id="AK131209">
    <property type="protein sequence ID" value="BAD18400.1"/>
    <property type="molecule type" value="mRNA"/>
</dbReference>
<dbReference type="EMBL" id="CH471135">
    <property type="protein sequence ID" value="EAW72578.1"/>
    <property type="molecule type" value="Genomic_DNA"/>
</dbReference>
<dbReference type="EMBL" id="BC118983">
    <property type="protein sequence ID" value="AAI18984.1"/>
    <property type="molecule type" value="mRNA"/>
</dbReference>
<dbReference type="EMBL" id="BC125273">
    <property type="protein sequence ID" value="AAI25274.1"/>
    <property type="molecule type" value="mRNA"/>
</dbReference>
<dbReference type="EMBL" id="AF064790">
    <property type="protein sequence ID" value="AAF16412.1"/>
    <property type="molecule type" value="Genomic_DNA"/>
</dbReference>
<dbReference type="CCDS" id="CCDS12977.1"/>
<dbReference type="RefSeq" id="NP_001193938.1">
    <property type="nucleotide sequence ID" value="NM_001207009.2"/>
</dbReference>
<dbReference type="RefSeq" id="NP_940860.2">
    <property type="nucleotide sequence ID" value="NM_198458.3"/>
</dbReference>
<dbReference type="SMR" id="Q6ZNH5"/>
<dbReference type="BioGRID" id="127835">
    <property type="interactions" value="187"/>
</dbReference>
<dbReference type="FunCoup" id="Q6ZNH5">
    <property type="interactions" value="20"/>
</dbReference>
<dbReference type="IntAct" id="Q6ZNH5">
    <property type="interactions" value="50"/>
</dbReference>
<dbReference type="STRING" id="9606.ENSP00000311183"/>
<dbReference type="iPTMnet" id="Q6ZNH5"/>
<dbReference type="PhosphoSitePlus" id="Q6ZNH5"/>
<dbReference type="BioMuta" id="ZNF497"/>
<dbReference type="DMDM" id="229462815"/>
<dbReference type="jPOST" id="Q6ZNH5"/>
<dbReference type="MassIVE" id="Q6ZNH5"/>
<dbReference type="PaxDb" id="9606-ENSP00000311183"/>
<dbReference type="PeptideAtlas" id="Q6ZNH5"/>
<dbReference type="ProteomicsDB" id="68026"/>
<dbReference type="Antibodypedia" id="19686">
    <property type="antibodies" value="37 antibodies from 18 providers"/>
</dbReference>
<dbReference type="DNASU" id="162968"/>
<dbReference type="Ensembl" id="ENST00000311044.8">
    <property type="protein sequence ID" value="ENSP00000311183.2"/>
    <property type="gene ID" value="ENSG00000174586.11"/>
</dbReference>
<dbReference type="Ensembl" id="ENST00000425453.3">
    <property type="protein sequence ID" value="ENSP00000402815.2"/>
    <property type="gene ID" value="ENSG00000174586.11"/>
</dbReference>
<dbReference type="GeneID" id="162968"/>
<dbReference type="KEGG" id="hsa:162968"/>
<dbReference type="MANE-Select" id="ENST00000311044.8">
    <property type="protein sequence ID" value="ENSP00000311183.2"/>
    <property type="RefSeq nucleotide sequence ID" value="NM_198458.3"/>
    <property type="RefSeq protein sequence ID" value="NP_940860.2"/>
</dbReference>
<dbReference type="UCSC" id="uc002qsh.3">
    <property type="organism name" value="human"/>
</dbReference>
<dbReference type="AGR" id="HGNC:23714"/>
<dbReference type="CTD" id="162968"/>
<dbReference type="GeneCards" id="ZNF497"/>
<dbReference type="HGNC" id="HGNC:23714">
    <property type="gene designation" value="ZNF497"/>
</dbReference>
<dbReference type="HPA" id="ENSG00000174586">
    <property type="expression patterns" value="Low tissue specificity"/>
</dbReference>
<dbReference type="neXtProt" id="NX_Q6ZNH5"/>
<dbReference type="OpenTargets" id="ENSG00000174586"/>
<dbReference type="PharmGKB" id="PA134994387"/>
<dbReference type="VEuPathDB" id="HostDB:ENSG00000174586"/>
<dbReference type="eggNOG" id="KOG1721">
    <property type="taxonomic scope" value="Eukaryota"/>
</dbReference>
<dbReference type="GeneTree" id="ENSGT00940000165876"/>
<dbReference type="HOGENOM" id="CLU_002678_44_0_1"/>
<dbReference type="InParanoid" id="Q6ZNH5"/>
<dbReference type="OMA" id="WGSWEDS"/>
<dbReference type="OrthoDB" id="3437960at2759"/>
<dbReference type="PAN-GO" id="Q6ZNH5">
    <property type="GO annotations" value="3 GO annotations based on evolutionary models"/>
</dbReference>
<dbReference type="PhylomeDB" id="Q6ZNH5"/>
<dbReference type="TreeFam" id="TF337005"/>
<dbReference type="PathwayCommons" id="Q6ZNH5"/>
<dbReference type="SignaLink" id="Q6ZNH5"/>
<dbReference type="BioGRID-ORCS" id="162968">
    <property type="hits" value="18 hits in 1183 CRISPR screens"/>
</dbReference>
<dbReference type="GenomeRNAi" id="162968"/>
<dbReference type="Pharos" id="Q6ZNH5">
    <property type="development level" value="Tdark"/>
</dbReference>
<dbReference type="PRO" id="PR:Q6ZNH5"/>
<dbReference type="Proteomes" id="UP000005640">
    <property type="component" value="Chromosome 19"/>
</dbReference>
<dbReference type="RNAct" id="Q6ZNH5">
    <property type="molecule type" value="protein"/>
</dbReference>
<dbReference type="Bgee" id="ENSG00000174586">
    <property type="expression patterns" value="Expressed in right uterine tube and 92 other cell types or tissues"/>
</dbReference>
<dbReference type="ExpressionAtlas" id="Q6ZNH5">
    <property type="expression patterns" value="baseline and differential"/>
</dbReference>
<dbReference type="GO" id="GO:0005634">
    <property type="term" value="C:nucleus"/>
    <property type="evidence" value="ECO:0007669"/>
    <property type="project" value="UniProtKB-SubCell"/>
</dbReference>
<dbReference type="GO" id="GO:0003700">
    <property type="term" value="F:DNA-binding transcription factor activity"/>
    <property type="evidence" value="ECO:0000318"/>
    <property type="project" value="GO_Central"/>
</dbReference>
<dbReference type="GO" id="GO:0000978">
    <property type="term" value="F:RNA polymerase II cis-regulatory region sequence-specific DNA binding"/>
    <property type="evidence" value="ECO:0000318"/>
    <property type="project" value="GO_Central"/>
</dbReference>
<dbReference type="GO" id="GO:0008270">
    <property type="term" value="F:zinc ion binding"/>
    <property type="evidence" value="ECO:0007669"/>
    <property type="project" value="UniProtKB-KW"/>
</dbReference>
<dbReference type="GO" id="GO:0006357">
    <property type="term" value="P:regulation of transcription by RNA polymerase II"/>
    <property type="evidence" value="ECO:0000318"/>
    <property type="project" value="GO_Central"/>
</dbReference>
<dbReference type="FunFam" id="3.30.160.60:FF:000111">
    <property type="entry name" value="GLI family zinc finger 4"/>
    <property type="match status" value="1"/>
</dbReference>
<dbReference type="FunFam" id="3.30.160.60:FF:000647">
    <property type="entry name" value="myeloid zinc finger 1 isoform X1"/>
    <property type="match status" value="1"/>
</dbReference>
<dbReference type="FunFam" id="3.30.160.60:FF:000198">
    <property type="entry name" value="zinc finger protein 10 isoform X1"/>
    <property type="match status" value="1"/>
</dbReference>
<dbReference type="FunFam" id="3.30.160.60:FF:002239">
    <property type="entry name" value="Zinc finger protein 226"/>
    <property type="match status" value="1"/>
</dbReference>
<dbReference type="FunFam" id="3.30.160.60:FF:002176">
    <property type="entry name" value="zinc finger protein 236 isoform X7"/>
    <property type="match status" value="1"/>
</dbReference>
<dbReference type="FunFam" id="3.30.160.60:FF:000185">
    <property type="entry name" value="zinc finger protein 319"/>
    <property type="match status" value="2"/>
</dbReference>
<dbReference type="FunFam" id="3.30.160.60:FF:001049">
    <property type="entry name" value="zinc finger protein 319"/>
    <property type="match status" value="1"/>
</dbReference>
<dbReference type="FunFam" id="3.30.160.60:FF:002343">
    <property type="entry name" value="Zinc finger protein 33A"/>
    <property type="match status" value="1"/>
</dbReference>
<dbReference type="FunFam" id="3.30.160.60:FF:000016">
    <property type="entry name" value="zinc finger protein 37 homolog"/>
    <property type="match status" value="1"/>
</dbReference>
<dbReference type="FunFam" id="3.30.160.60:FF:002254">
    <property type="entry name" value="Zinc finger protein 540"/>
    <property type="match status" value="1"/>
</dbReference>
<dbReference type="FunFam" id="3.30.160.60:FF:000660">
    <property type="entry name" value="zinc finger protein 64 isoform X1"/>
    <property type="match status" value="1"/>
</dbReference>
<dbReference type="FunFam" id="3.30.160.60:FF:000495">
    <property type="entry name" value="zinc finger protein 668"/>
    <property type="match status" value="1"/>
</dbReference>
<dbReference type="FunFam" id="3.30.160.60:FF:000710">
    <property type="entry name" value="Zinc finger protein 768"/>
    <property type="match status" value="1"/>
</dbReference>
<dbReference type="Gene3D" id="3.30.160.60">
    <property type="entry name" value="Classic Zinc Finger"/>
    <property type="match status" value="14"/>
</dbReference>
<dbReference type="InterPro" id="IPR050589">
    <property type="entry name" value="Ikaros_C2H2-ZF"/>
</dbReference>
<dbReference type="InterPro" id="IPR036236">
    <property type="entry name" value="Znf_C2H2_sf"/>
</dbReference>
<dbReference type="InterPro" id="IPR013087">
    <property type="entry name" value="Znf_C2H2_type"/>
</dbReference>
<dbReference type="PANTHER" id="PTHR24404">
    <property type="entry name" value="ZINC FINGER PROTEIN"/>
    <property type="match status" value="1"/>
</dbReference>
<dbReference type="PANTHER" id="PTHR24404:SF41">
    <property type="entry name" value="ZINC FINGER PROTEIN 613"/>
    <property type="match status" value="1"/>
</dbReference>
<dbReference type="Pfam" id="PF00096">
    <property type="entry name" value="zf-C2H2"/>
    <property type="match status" value="13"/>
</dbReference>
<dbReference type="SMART" id="SM00355">
    <property type="entry name" value="ZnF_C2H2"/>
    <property type="match status" value="14"/>
</dbReference>
<dbReference type="SUPFAM" id="SSF57667">
    <property type="entry name" value="beta-beta-alpha zinc fingers"/>
    <property type="match status" value="8"/>
</dbReference>
<dbReference type="PROSITE" id="PS00028">
    <property type="entry name" value="ZINC_FINGER_C2H2_1"/>
    <property type="match status" value="14"/>
</dbReference>
<dbReference type="PROSITE" id="PS50157">
    <property type="entry name" value="ZINC_FINGER_C2H2_2"/>
    <property type="match status" value="14"/>
</dbReference>
<organism>
    <name type="scientific">Homo sapiens</name>
    <name type="common">Human</name>
    <dbReference type="NCBI Taxonomy" id="9606"/>
    <lineage>
        <taxon>Eukaryota</taxon>
        <taxon>Metazoa</taxon>
        <taxon>Chordata</taxon>
        <taxon>Craniata</taxon>
        <taxon>Vertebrata</taxon>
        <taxon>Euteleostomi</taxon>
        <taxon>Mammalia</taxon>
        <taxon>Eutheria</taxon>
        <taxon>Euarchontoglires</taxon>
        <taxon>Primates</taxon>
        <taxon>Haplorrhini</taxon>
        <taxon>Catarrhini</taxon>
        <taxon>Hominidae</taxon>
        <taxon>Homo</taxon>
    </lineage>
</organism>